<sequence length="294" mass="32219">MLGDLFTKPKKRKYATIPSDGTKADVPEGIMTKCPECKKIMYTKELQKNLMVCNYCGFHHPIGAKVRIDMLVDEGSFEELDANLTTANPLGFENYMDRIEKDKQKSGLNEAIVTGHATIAGNPLVIAVMDSRFRMASMGSVVGEKILRAVEEADKTNKPFVVFTASGGARMQEGMISLMQMAKTSAAFKRFSNHGGLIITVMTHPTTGGVSASFASLGDYNFAEPGALIGFAGRRVIEQTVREELPEDFQTAEFLLKHGQLDDCISRLDLQNKLSFILRIHAKTPETGGESDGE</sequence>
<reference key="1">
    <citation type="journal article" date="2006" name="J. Bacteriol.">
        <title>Whole-genome sequence of Listeria welshimeri reveals common steps in genome reduction with Listeria innocua as compared to Listeria monocytogenes.</title>
        <authorList>
            <person name="Hain T."/>
            <person name="Steinweg C."/>
            <person name="Kuenne C.T."/>
            <person name="Billion A."/>
            <person name="Ghai R."/>
            <person name="Chatterjee S.S."/>
            <person name="Domann E."/>
            <person name="Kaerst U."/>
            <person name="Goesmann A."/>
            <person name="Bekel T."/>
            <person name="Bartels D."/>
            <person name="Kaiser O."/>
            <person name="Meyer F."/>
            <person name="Puehler A."/>
            <person name="Weisshaar B."/>
            <person name="Wehland J."/>
            <person name="Liang C."/>
            <person name="Dandekar T."/>
            <person name="Lampidis R."/>
            <person name="Kreft J."/>
            <person name="Goebel W."/>
            <person name="Chakraborty T."/>
        </authorList>
    </citation>
    <scope>NUCLEOTIDE SEQUENCE [LARGE SCALE GENOMIC DNA]</scope>
    <source>
        <strain>ATCC 35897 / DSM 20650 / CCUG 15529 / CIP 8149 / NCTC 11857 / SLCC 5334 / V8</strain>
    </source>
</reference>
<feature type="chain" id="PRO_0000389786" description="Acetyl-coenzyme A carboxylase carboxyl transferase subunit beta">
    <location>
        <begin position="1"/>
        <end position="294"/>
    </location>
</feature>
<feature type="domain" description="CoA carboxyltransferase N-terminal" evidence="2">
    <location>
        <begin position="30"/>
        <end position="294"/>
    </location>
</feature>
<feature type="zinc finger region" description="C4-type" evidence="1">
    <location>
        <begin position="34"/>
        <end position="56"/>
    </location>
</feature>
<feature type="binding site" evidence="1">
    <location>
        <position position="34"/>
    </location>
    <ligand>
        <name>Zn(2+)</name>
        <dbReference type="ChEBI" id="CHEBI:29105"/>
    </ligand>
</feature>
<feature type="binding site" evidence="1">
    <location>
        <position position="37"/>
    </location>
    <ligand>
        <name>Zn(2+)</name>
        <dbReference type="ChEBI" id="CHEBI:29105"/>
    </ligand>
</feature>
<feature type="binding site" evidence="1">
    <location>
        <position position="53"/>
    </location>
    <ligand>
        <name>Zn(2+)</name>
        <dbReference type="ChEBI" id="CHEBI:29105"/>
    </ligand>
</feature>
<feature type="binding site" evidence="1">
    <location>
        <position position="56"/>
    </location>
    <ligand>
        <name>Zn(2+)</name>
        <dbReference type="ChEBI" id="CHEBI:29105"/>
    </ligand>
</feature>
<name>ACCD_LISW6</name>
<dbReference type="EC" id="2.1.3.15" evidence="1"/>
<dbReference type="EMBL" id="AM263198">
    <property type="protein sequence ID" value="CAK21004.1"/>
    <property type="molecule type" value="Genomic_DNA"/>
</dbReference>
<dbReference type="RefSeq" id="WP_011702371.1">
    <property type="nucleotide sequence ID" value="NC_008555.1"/>
</dbReference>
<dbReference type="SMR" id="A0AJ22"/>
<dbReference type="STRING" id="386043.lwe1586"/>
<dbReference type="GeneID" id="61189463"/>
<dbReference type="KEGG" id="lwe:lwe1586"/>
<dbReference type="eggNOG" id="COG0777">
    <property type="taxonomic scope" value="Bacteria"/>
</dbReference>
<dbReference type="HOGENOM" id="CLU_015486_1_1_9"/>
<dbReference type="OrthoDB" id="9772975at2"/>
<dbReference type="UniPathway" id="UPA00655">
    <property type="reaction ID" value="UER00711"/>
</dbReference>
<dbReference type="Proteomes" id="UP000000779">
    <property type="component" value="Chromosome"/>
</dbReference>
<dbReference type="GO" id="GO:0009317">
    <property type="term" value="C:acetyl-CoA carboxylase complex"/>
    <property type="evidence" value="ECO:0007669"/>
    <property type="project" value="InterPro"/>
</dbReference>
<dbReference type="GO" id="GO:0003989">
    <property type="term" value="F:acetyl-CoA carboxylase activity"/>
    <property type="evidence" value="ECO:0007669"/>
    <property type="project" value="InterPro"/>
</dbReference>
<dbReference type="GO" id="GO:0005524">
    <property type="term" value="F:ATP binding"/>
    <property type="evidence" value="ECO:0007669"/>
    <property type="project" value="UniProtKB-KW"/>
</dbReference>
<dbReference type="GO" id="GO:0016743">
    <property type="term" value="F:carboxyl- or carbamoyltransferase activity"/>
    <property type="evidence" value="ECO:0007669"/>
    <property type="project" value="UniProtKB-UniRule"/>
</dbReference>
<dbReference type="GO" id="GO:0008270">
    <property type="term" value="F:zinc ion binding"/>
    <property type="evidence" value="ECO:0007669"/>
    <property type="project" value="UniProtKB-UniRule"/>
</dbReference>
<dbReference type="GO" id="GO:0006633">
    <property type="term" value="P:fatty acid biosynthetic process"/>
    <property type="evidence" value="ECO:0007669"/>
    <property type="project" value="UniProtKB-KW"/>
</dbReference>
<dbReference type="GO" id="GO:2001295">
    <property type="term" value="P:malonyl-CoA biosynthetic process"/>
    <property type="evidence" value="ECO:0007669"/>
    <property type="project" value="UniProtKB-UniRule"/>
</dbReference>
<dbReference type="Gene3D" id="3.90.226.10">
    <property type="entry name" value="2-enoyl-CoA Hydratase, Chain A, domain 1"/>
    <property type="match status" value="1"/>
</dbReference>
<dbReference type="HAMAP" id="MF_01395">
    <property type="entry name" value="AcetylCoA_CT_beta"/>
    <property type="match status" value="1"/>
</dbReference>
<dbReference type="InterPro" id="IPR034733">
    <property type="entry name" value="AcCoA_carboxyl_beta"/>
</dbReference>
<dbReference type="InterPro" id="IPR000438">
    <property type="entry name" value="Acetyl_CoA_COase_Trfase_b_su"/>
</dbReference>
<dbReference type="InterPro" id="IPR029045">
    <property type="entry name" value="ClpP/crotonase-like_dom_sf"/>
</dbReference>
<dbReference type="InterPro" id="IPR011762">
    <property type="entry name" value="COA_CT_N"/>
</dbReference>
<dbReference type="InterPro" id="IPR041010">
    <property type="entry name" value="Znf-ACC"/>
</dbReference>
<dbReference type="NCBIfam" id="TIGR00515">
    <property type="entry name" value="accD"/>
    <property type="match status" value="1"/>
</dbReference>
<dbReference type="PANTHER" id="PTHR42995">
    <property type="entry name" value="ACETYL-COENZYME A CARBOXYLASE CARBOXYL TRANSFERASE SUBUNIT BETA, CHLOROPLASTIC"/>
    <property type="match status" value="1"/>
</dbReference>
<dbReference type="PANTHER" id="PTHR42995:SF5">
    <property type="entry name" value="ACETYL-COENZYME A CARBOXYLASE CARBOXYL TRANSFERASE SUBUNIT BETA, CHLOROPLASTIC"/>
    <property type="match status" value="1"/>
</dbReference>
<dbReference type="Pfam" id="PF01039">
    <property type="entry name" value="Carboxyl_trans"/>
    <property type="match status" value="1"/>
</dbReference>
<dbReference type="Pfam" id="PF17848">
    <property type="entry name" value="Zn_ribbon_ACC"/>
    <property type="match status" value="1"/>
</dbReference>
<dbReference type="PRINTS" id="PR01070">
    <property type="entry name" value="ACCCTRFRASEB"/>
</dbReference>
<dbReference type="SUPFAM" id="SSF52096">
    <property type="entry name" value="ClpP/crotonase"/>
    <property type="match status" value="1"/>
</dbReference>
<dbReference type="PROSITE" id="PS50980">
    <property type="entry name" value="COA_CT_NTER"/>
    <property type="match status" value="1"/>
</dbReference>
<gene>
    <name evidence="1" type="primary">accD</name>
    <name type="ordered locus">lwe1586</name>
</gene>
<organism>
    <name type="scientific">Listeria welshimeri serovar 6b (strain ATCC 35897 / DSM 20650 / CCUG 15529 / CIP 8149 / NCTC 11857 / SLCC 5334 / V8)</name>
    <dbReference type="NCBI Taxonomy" id="386043"/>
    <lineage>
        <taxon>Bacteria</taxon>
        <taxon>Bacillati</taxon>
        <taxon>Bacillota</taxon>
        <taxon>Bacilli</taxon>
        <taxon>Bacillales</taxon>
        <taxon>Listeriaceae</taxon>
        <taxon>Listeria</taxon>
    </lineage>
</organism>
<proteinExistence type="inferred from homology"/>
<keyword id="KW-0067">ATP-binding</keyword>
<keyword id="KW-0963">Cytoplasm</keyword>
<keyword id="KW-0275">Fatty acid biosynthesis</keyword>
<keyword id="KW-0276">Fatty acid metabolism</keyword>
<keyword id="KW-0444">Lipid biosynthesis</keyword>
<keyword id="KW-0443">Lipid metabolism</keyword>
<keyword id="KW-0479">Metal-binding</keyword>
<keyword id="KW-0547">Nucleotide-binding</keyword>
<keyword id="KW-0808">Transferase</keyword>
<keyword id="KW-0862">Zinc</keyword>
<keyword id="KW-0863">Zinc-finger</keyword>
<protein>
    <recommendedName>
        <fullName evidence="1">Acetyl-coenzyme A carboxylase carboxyl transferase subunit beta</fullName>
        <shortName evidence="1">ACCase subunit beta</shortName>
        <shortName evidence="1">Acetyl-CoA carboxylase carboxyltransferase subunit beta</shortName>
        <ecNumber evidence="1">2.1.3.15</ecNumber>
    </recommendedName>
</protein>
<accession>A0AJ22</accession>
<comment type="function">
    <text evidence="1">Component of the acetyl coenzyme A carboxylase (ACC) complex. Biotin carboxylase (BC) catalyzes the carboxylation of biotin on its carrier protein (BCCP) and then the CO(2) group is transferred by the transcarboxylase to acetyl-CoA to form malonyl-CoA.</text>
</comment>
<comment type="catalytic activity">
    <reaction evidence="1">
        <text>N(6)-carboxybiotinyl-L-lysyl-[protein] + acetyl-CoA = N(6)-biotinyl-L-lysyl-[protein] + malonyl-CoA</text>
        <dbReference type="Rhea" id="RHEA:54728"/>
        <dbReference type="Rhea" id="RHEA-COMP:10505"/>
        <dbReference type="Rhea" id="RHEA-COMP:10506"/>
        <dbReference type="ChEBI" id="CHEBI:57288"/>
        <dbReference type="ChEBI" id="CHEBI:57384"/>
        <dbReference type="ChEBI" id="CHEBI:83144"/>
        <dbReference type="ChEBI" id="CHEBI:83145"/>
        <dbReference type="EC" id="2.1.3.15"/>
    </reaction>
</comment>
<comment type="cofactor">
    <cofactor evidence="1">
        <name>Zn(2+)</name>
        <dbReference type="ChEBI" id="CHEBI:29105"/>
    </cofactor>
    <text evidence="1">Binds 1 zinc ion per subunit.</text>
</comment>
<comment type="pathway">
    <text evidence="1">Lipid metabolism; malonyl-CoA biosynthesis; malonyl-CoA from acetyl-CoA: step 1/1.</text>
</comment>
<comment type="subunit">
    <text evidence="1">Acetyl-CoA carboxylase is a heterohexamer composed of biotin carboxyl carrier protein (AccB), biotin carboxylase (AccC) and two subunits each of ACCase subunit alpha (AccA) and ACCase subunit beta (AccD).</text>
</comment>
<comment type="subcellular location">
    <subcellularLocation>
        <location evidence="1">Cytoplasm</location>
    </subcellularLocation>
</comment>
<comment type="similarity">
    <text evidence="1">Belongs to the AccD/PCCB family.</text>
</comment>
<evidence type="ECO:0000255" key="1">
    <source>
        <dbReference type="HAMAP-Rule" id="MF_01395"/>
    </source>
</evidence>
<evidence type="ECO:0000255" key="2">
    <source>
        <dbReference type="PROSITE-ProRule" id="PRU01136"/>
    </source>
</evidence>